<dbReference type="EMBL" id="AP009256">
    <property type="protein sequence ID" value="BAF39936.1"/>
    <property type="molecule type" value="Genomic_DNA"/>
</dbReference>
<dbReference type="RefSeq" id="WP_011743486.1">
    <property type="nucleotide sequence ID" value="NC_008618.1"/>
</dbReference>
<dbReference type="SMR" id="A1A2K3"/>
<dbReference type="STRING" id="367928.BAD_1155"/>
<dbReference type="PaxDb" id="1680-BADO_1306"/>
<dbReference type="GeneID" id="4556629"/>
<dbReference type="KEGG" id="bad:BAD_1155"/>
<dbReference type="HOGENOM" id="CLU_066632_1_1_11"/>
<dbReference type="Proteomes" id="UP000008702">
    <property type="component" value="Chromosome"/>
</dbReference>
<dbReference type="GO" id="GO:0043590">
    <property type="term" value="C:bacterial nucleoid"/>
    <property type="evidence" value="ECO:0007669"/>
    <property type="project" value="TreeGrafter"/>
</dbReference>
<dbReference type="GO" id="GO:0006310">
    <property type="term" value="P:DNA recombination"/>
    <property type="evidence" value="ECO:0007669"/>
    <property type="project" value="UniProtKB-UniRule"/>
</dbReference>
<dbReference type="GO" id="GO:0006302">
    <property type="term" value="P:double-strand break repair"/>
    <property type="evidence" value="ECO:0007669"/>
    <property type="project" value="TreeGrafter"/>
</dbReference>
<dbReference type="Gene3D" id="2.40.50.140">
    <property type="entry name" value="Nucleic acid-binding proteins"/>
    <property type="match status" value="1"/>
</dbReference>
<dbReference type="Gene3D" id="1.20.1440.120">
    <property type="entry name" value="Recombination protein O, C-terminal domain"/>
    <property type="match status" value="1"/>
</dbReference>
<dbReference type="HAMAP" id="MF_00201">
    <property type="entry name" value="RecO"/>
    <property type="match status" value="1"/>
</dbReference>
<dbReference type="InterPro" id="IPR037278">
    <property type="entry name" value="ARFGAP/RecO"/>
</dbReference>
<dbReference type="InterPro" id="IPR022572">
    <property type="entry name" value="DNA_rep/recomb_RecO_N"/>
</dbReference>
<dbReference type="InterPro" id="IPR012340">
    <property type="entry name" value="NA-bd_OB-fold"/>
</dbReference>
<dbReference type="InterPro" id="IPR003717">
    <property type="entry name" value="RecO"/>
</dbReference>
<dbReference type="InterPro" id="IPR042242">
    <property type="entry name" value="RecO_C"/>
</dbReference>
<dbReference type="NCBIfam" id="TIGR00613">
    <property type="entry name" value="reco"/>
    <property type="match status" value="1"/>
</dbReference>
<dbReference type="PANTHER" id="PTHR33991">
    <property type="entry name" value="DNA REPAIR PROTEIN RECO"/>
    <property type="match status" value="1"/>
</dbReference>
<dbReference type="PANTHER" id="PTHR33991:SF1">
    <property type="entry name" value="DNA REPAIR PROTEIN RECO"/>
    <property type="match status" value="1"/>
</dbReference>
<dbReference type="Pfam" id="PF02565">
    <property type="entry name" value="RecO_C"/>
    <property type="match status" value="1"/>
</dbReference>
<dbReference type="Pfam" id="PF11967">
    <property type="entry name" value="RecO_N"/>
    <property type="match status" value="1"/>
</dbReference>
<dbReference type="SUPFAM" id="SSF57863">
    <property type="entry name" value="ArfGap/RecO-like zinc finger"/>
    <property type="match status" value="1"/>
</dbReference>
<dbReference type="SUPFAM" id="SSF50249">
    <property type="entry name" value="Nucleic acid-binding proteins"/>
    <property type="match status" value="1"/>
</dbReference>
<feature type="chain" id="PRO_1000012122" description="DNA repair protein RecO">
    <location>
        <begin position="1"/>
        <end position="246"/>
    </location>
</feature>
<protein>
    <recommendedName>
        <fullName evidence="1">DNA repair protein RecO</fullName>
    </recommendedName>
    <alternativeName>
        <fullName evidence="1">Recombination protein O</fullName>
    </alternativeName>
</protein>
<accession>A1A2K3</accession>
<keyword id="KW-0227">DNA damage</keyword>
<keyword id="KW-0233">DNA recombination</keyword>
<keyword id="KW-0234">DNA repair</keyword>
<keyword id="KW-1185">Reference proteome</keyword>
<reference key="1">
    <citation type="submission" date="2006-12" db="EMBL/GenBank/DDBJ databases">
        <title>Bifidobacterium adolescentis complete genome sequence.</title>
        <authorList>
            <person name="Suzuki T."/>
            <person name="Tsuda Y."/>
            <person name="Kanou N."/>
            <person name="Inoue T."/>
            <person name="Kumazaki K."/>
            <person name="Nagano S."/>
            <person name="Hirai S."/>
            <person name="Tanaka K."/>
            <person name="Watanabe K."/>
        </authorList>
    </citation>
    <scope>NUCLEOTIDE SEQUENCE [LARGE SCALE GENOMIC DNA]</scope>
    <source>
        <strain>ATCC 15703 / DSM 20083 / NCTC 11814 / E194a</strain>
    </source>
</reference>
<comment type="function">
    <text evidence="1">Involved in DNA repair and RecF pathway recombination.</text>
</comment>
<comment type="similarity">
    <text evidence="1">Belongs to the RecO family.</text>
</comment>
<name>RECO_BIFAA</name>
<sequence length="246" mass="26768">MPLYQDEGVVLRTAKLGEADRILTLLTRDHGKVRAVAKGVRRTKSRFGGRLEPFMRVALLIAEGRSLDVVSQAESIAAYAGPICADFQAYTAANVICETADKLVATEKEPAVAQYRLVLGALNALAKHAHEPSTIGDSYVLRALAIAGWTPRLRVCVVCGEPISSALSWYFSIPAGGLMCAADHTPESEAVSWDAICRLSALVDGDWGELDGVPASASIQRETHQIVEEWGEYYLERPIRSMRLLD</sequence>
<organism>
    <name type="scientific">Bifidobacterium adolescentis (strain ATCC 15703 / DSM 20083 / NCTC 11814 / E194a)</name>
    <dbReference type="NCBI Taxonomy" id="367928"/>
    <lineage>
        <taxon>Bacteria</taxon>
        <taxon>Bacillati</taxon>
        <taxon>Actinomycetota</taxon>
        <taxon>Actinomycetes</taxon>
        <taxon>Bifidobacteriales</taxon>
        <taxon>Bifidobacteriaceae</taxon>
        <taxon>Bifidobacterium</taxon>
    </lineage>
</organism>
<evidence type="ECO:0000255" key="1">
    <source>
        <dbReference type="HAMAP-Rule" id="MF_00201"/>
    </source>
</evidence>
<proteinExistence type="inferred from homology"/>
<gene>
    <name evidence="1" type="primary">recO</name>
    <name type="ordered locus">BAD_1155</name>
</gene>